<accession>Q7LXK4</accession>
<comment type="function">
    <text evidence="1">DNA-dependent RNA polymerase (RNAP) catalyzes the transcription of DNA into RNA using the four ribonucleoside triphosphates as substrates. This subunit is less well bound than the others.</text>
</comment>
<comment type="catalytic activity">
    <reaction evidence="1">
        <text>RNA(n) + a ribonucleoside 5'-triphosphate = RNA(n+1) + diphosphate</text>
        <dbReference type="Rhea" id="RHEA:21248"/>
        <dbReference type="Rhea" id="RHEA-COMP:14527"/>
        <dbReference type="Rhea" id="RHEA-COMP:17342"/>
        <dbReference type="ChEBI" id="CHEBI:33019"/>
        <dbReference type="ChEBI" id="CHEBI:61557"/>
        <dbReference type="ChEBI" id="CHEBI:140395"/>
        <dbReference type="EC" id="2.7.7.6"/>
    </reaction>
</comment>
<comment type="subunit">
    <text evidence="2">Part of the 13-subunit RNA polymerase complex. Forms a stalk with Rpo7 that extends from the main structure.</text>
</comment>
<comment type="subcellular location">
    <subcellularLocation>
        <location evidence="1">Cytoplasm</location>
    </subcellularLocation>
</comment>
<comment type="similarity">
    <text evidence="1">Belongs to the eukaryotic RPB4 RNA polymerase subunit family.</text>
</comment>
<feature type="chain" id="PRO_0000453811" description="DNA-directed RNA polymerase subunit Rpo4">
    <location>
        <begin position="1"/>
        <end position="113"/>
    </location>
</feature>
<feature type="strand" evidence="6">
    <location>
        <begin position="3"/>
        <end position="12"/>
    </location>
</feature>
<feature type="helix" evidence="6">
    <location>
        <begin position="16"/>
        <end position="22"/>
    </location>
</feature>
<feature type="turn" evidence="6">
    <location>
        <begin position="23"/>
        <end position="27"/>
    </location>
</feature>
<feature type="helix" evidence="6">
    <location>
        <begin position="32"/>
        <end position="35"/>
    </location>
</feature>
<feature type="helix" evidence="6">
    <location>
        <begin position="37"/>
        <end position="40"/>
    </location>
</feature>
<feature type="helix" evidence="6">
    <location>
        <begin position="49"/>
        <end position="55"/>
    </location>
</feature>
<feature type="turn" evidence="6">
    <location>
        <begin position="56"/>
        <end position="61"/>
    </location>
</feature>
<feature type="helix" evidence="6">
    <location>
        <begin position="66"/>
        <end position="70"/>
    </location>
</feature>
<feature type="helix" evidence="6">
    <location>
        <begin position="72"/>
        <end position="75"/>
    </location>
</feature>
<feature type="turn" evidence="6">
    <location>
        <begin position="80"/>
        <end position="86"/>
    </location>
</feature>
<name>RPO4_SACS2</name>
<evidence type="ECO:0000255" key="1">
    <source>
        <dbReference type="HAMAP-Rule" id="MF_00864"/>
    </source>
</evidence>
<evidence type="ECO:0000269" key="2">
    <source>
    </source>
</evidence>
<evidence type="ECO:0000303" key="3">
    <source>
    </source>
</evidence>
<evidence type="ECO:0007744" key="4">
    <source>
        <dbReference type="PDB" id="2PMZ"/>
    </source>
</evidence>
<evidence type="ECO:0007744" key="5">
    <source>
        <dbReference type="PDB" id="3HKZ"/>
    </source>
</evidence>
<evidence type="ECO:0007829" key="6">
    <source>
        <dbReference type="PDB" id="2PMZ"/>
    </source>
</evidence>
<proteinExistence type="evidence at protein level"/>
<organism>
    <name type="scientific">Saccharolobus solfataricus (strain ATCC 35092 / DSM 1617 / JCM 11322 / P2)</name>
    <name type="common">Sulfolobus solfataricus</name>
    <dbReference type="NCBI Taxonomy" id="273057"/>
    <lineage>
        <taxon>Archaea</taxon>
        <taxon>Thermoproteota</taxon>
        <taxon>Thermoprotei</taxon>
        <taxon>Sulfolobales</taxon>
        <taxon>Sulfolobaceae</taxon>
        <taxon>Saccharolobus</taxon>
    </lineage>
</organism>
<dbReference type="EC" id="2.7.7.6" evidence="1"/>
<dbReference type="EMBL" id="AE006641">
    <property type="protein sequence ID" value="AAK41046.1"/>
    <property type="molecule type" value="Genomic_DNA"/>
</dbReference>
<dbReference type="PIR" id="G90223">
    <property type="entry name" value="G90223"/>
</dbReference>
<dbReference type="RefSeq" id="WP_009991330.1">
    <property type="nucleotide sequence ID" value="NC_002754.1"/>
</dbReference>
<dbReference type="PDB" id="2PMZ">
    <property type="method" value="X-ray"/>
    <property type="resolution" value="3.40 A"/>
    <property type="chains" value="F/U=1-113"/>
</dbReference>
<dbReference type="PDB" id="3HKZ">
    <property type="method" value="X-ray"/>
    <property type="resolution" value="3.40 A"/>
    <property type="chains" value="F/R=1-113"/>
</dbReference>
<dbReference type="PDBsum" id="2PMZ"/>
<dbReference type="PDBsum" id="3HKZ"/>
<dbReference type="SMR" id="Q7LXK4"/>
<dbReference type="DIP" id="DIP-60648N"/>
<dbReference type="FunCoup" id="Q7LXK4">
    <property type="interactions" value="10"/>
</dbReference>
<dbReference type="IntAct" id="Q7LXK4">
    <property type="interactions" value="1"/>
</dbReference>
<dbReference type="STRING" id="273057.SSO0751"/>
<dbReference type="PaxDb" id="273057-SSO0751"/>
<dbReference type="EnsemblBacteria" id="AAK41046">
    <property type="protein sequence ID" value="AAK41046"/>
    <property type="gene ID" value="SSO0751"/>
</dbReference>
<dbReference type="KEGG" id="sso:SSO0751"/>
<dbReference type="PATRIC" id="fig|273057.12.peg.746"/>
<dbReference type="eggNOG" id="arCOG01016">
    <property type="taxonomic scope" value="Archaea"/>
</dbReference>
<dbReference type="HOGENOM" id="CLU_165894_0_0_2"/>
<dbReference type="InParanoid" id="Q7LXK4"/>
<dbReference type="EvolutionaryTrace" id="Q7LXK4"/>
<dbReference type="Proteomes" id="UP000001974">
    <property type="component" value="Chromosome"/>
</dbReference>
<dbReference type="GO" id="GO:0005737">
    <property type="term" value="C:cytoplasm"/>
    <property type="evidence" value="ECO:0007669"/>
    <property type="project" value="UniProtKB-SubCell"/>
</dbReference>
<dbReference type="GO" id="GO:0000428">
    <property type="term" value="C:DNA-directed RNA polymerase complex"/>
    <property type="evidence" value="ECO:0000314"/>
    <property type="project" value="UniProtKB"/>
</dbReference>
<dbReference type="GO" id="GO:0003899">
    <property type="term" value="F:DNA-directed RNA polymerase activity"/>
    <property type="evidence" value="ECO:0007669"/>
    <property type="project" value="UniProtKB-UniRule"/>
</dbReference>
<dbReference type="GO" id="GO:0000166">
    <property type="term" value="F:nucleotide binding"/>
    <property type="evidence" value="ECO:0007669"/>
    <property type="project" value="InterPro"/>
</dbReference>
<dbReference type="GO" id="GO:0006352">
    <property type="term" value="P:DNA-templated transcription initiation"/>
    <property type="evidence" value="ECO:0007669"/>
    <property type="project" value="InterPro"/>
</dbReference>
<dbReference type="Gene3D" id="6.10.140.930">
    <property type="match status" value="1"/>
</dbReference>
<dbReference type="Gene3D" id="1.10.150.80">
    <property type="entry name" value="HRDC domain"/>
    <property type="match status" value="1"/>
</dbReference>
<dbReference type="HAMAP" id="MF_00864">
    <property type="entry name" value="RNApol_arch_Rpo4"/>
    <property type="match status" value="1"/>
</dbReference>
<dbReference type="InterPro" id="IPR010997">
    <property type="entry name" value="HRDC-like_sf"/>
</dbReference>
<dbReference type="InterPro" id="IPR044876">
    <property type="entry name" value="HRDC_dom_sf"/>
</dbReference>
<dbReference type="InterPro" id="IPR005574">
    <property type="entry name" value="Rpb4/RPC9"/>
</dbReference>
<dbReference type="InterPro" id="IPR010924">
    <property type="entry name" value="Rpo4"/>
</dbReference>
<dbReference type="NCBIfam" id="NF011553">
    <property type="entry name" value="PRK14981.1-5"/>
    <property type="match status" value="1"/>
</dbReference>
<dbReference type="PANTHER" id="PTHR39646:SF1">
    <property type="entry name" value="DNA-DIRECTED RNA POLYMERASE SUBUNIT RPO4"/>
    <property type="match status" value="1"/>
</dbReference>
<dbReference type="PANTHER" id="PTHR39646">
    <property type="entry name" value="RNA POLYMERASE RPB4"/>
    <property type="match status" value="1"/>
</dbReference>
<dbReference type="Pfam" id="PF03874">
    <property type="entry name" value="RNA_pol_Rpb4"/>
    <property type="match status" value="1"/>
</dbReference>
<dbReference type="PIRSF" id="PIRSF005053">
    <property type="entry name" value="RNA_pol_F_arch"/>
    <property type="match status" value="1"/>
</dbReference>
<dbReference type="SUPFAM" id="SSF47819">
    <property type="entry name" value="HRDC-like"/>
    <property type="match status" value="1"/>
</dbReference>
<gene>
    <name evidence="1" type="primary">rpo4</name>
    <name evidence="1 3" type="synonym">rpoF</name>
    <name type="ordered locus">SSO0751</name>
</gene>
<sequence length="113" mass="12811">MSSVYIVEEHYIPYSVAKKLLTDVIRSGGSSNLLQRTYDYLNSVEKCDAESAQKVIEELSNIVSREDVRAILASICPTTSDEVRSILVMDTNKTYTSEDIQKIIDIIRKYIKS</sequence>
<protein>
    <recommendedName>
        <fullName evidence="1">DNA-directed RNA polymerase subunit Rpo4</fullName>
        <ecNumber evidence="1">2.7.7.6</ecNumber>
    </recommendedName>
    <alternativeName>
        <fullName evidence="1">DNA-directed RNA polymerase subunit F</fullName>
    </alternativeName>
</protein>
<keyword id="KW-0002">3D-structure</keyword>
<keyword id="KW-0963">Cytoplasm</keyword>
<keyword id="KW-0240">DNA-directed RNA polymerase</keyword>
<keyword id="KW-0548">Nucleotidyltransferase</keyword>
<keyword id="KW-1185">Reference proteome</keyword>
<keyword id="KW-0804">Transcription</keyword>
<keyword id="KW-0808">Transferase</keyword>
<reference key="1">
    <citation type="journal article" date="2001" name="Proc. Natl. Acad. Sci. U.S.A.">
        <title>The complete genome of the crenarchaeon Sulfolobus solfataricus P2.</title>
        <authorList>
            <person name="She Q."/>
            <person name="Singh R.K."/>
            <person name="Confalonieri F."/>
            <person name="Zivanovic Y."/>
            <person name="Allard G."/>
            <person name="Awayez M.J."/>
            <person name="Chan-Weiher C.C.-Y."/>
            <person name="Clausen I.G."/>
            <person name="Curtis B.A."/>
            <person name="De Moors A."/>
            <person name="Erauso G."/>
            <person name="Fletcher C."/>
            <person name="Gordon P.M.K."/>
            <person name="Heikamp-de Jong I."/>
            <person name="Jeffries A.C."/>
            <person name="Kozera C.J."/>
            <person name="Medina N."/>
            <person name="Peng X."/>
            <person name="Thi-Ngoc H.P."/>
            <person name="Redder P."/>
            <person name="Schenk M.E."/>
            <person name="Theriault C."/>
            <person name="Tolstrup N."/>
            <person name="Charlebois R.L."/>
            <person name="Doolittle W.F."/>
            <person name="Duguet M."/>
            <person name="Gaasterland T."/>
            <person name="Garrett R.A."/>
            <person name="Ragan M.A."/>
            <person name="Sensen C.W."/>
            <person name="Van der Oost J."/>
        </authorList>
    </citation>
    <scope>NUCLEOTIDE SEQUENCE [LARGE SCALE GENOMIC DNA]</scope>
    <source>
        <strain>ATCC 35092 / DSM 1617 / JCM 11322 / P2</strain>
    </source>
</reference>
<reference evidence="4 5" key="2">
    <citation type="journal article" date="2008" name="Nature">
        <title>The X-ray crystal structure of RNA polymerase from Archaea.</title>
        <authorList>
            <person name="Hirata A."/>
            <person name="Klein B.J."/>
            <person name="Murakami K.S."/>
        </authorList>
    </citation>
    <scope>X-RAY CRYSTALLOGRAPHY (3.4 ANGSTROMS) OF THE RNA POLYMERASE COMPLEX</scope>
    <scope>SUBUNIT</scope>
    <source>
        <strain>ATCC 35092 / DSM 1617 / JCM 11322 / P2</strain>
    </source>
</reference>